<evidence type="ECO:0000255" key="1">
    <source>
        <dbReference type="HAMAP-Rule" id="MF_01202"/>
    </source>
</evidence>
<sequence length="434" mass="47383">MRVLVLGSGVIGTASAYYLARQGFEVTVVDRQPAVAMETSFANAGQISPGYASPWAAPGVPLKAIKWLLERHAPLAIKLTGDVDQYLWMAQMLRNCTASRYAVNKERMVRLSEYSRDCLDELRAETGINYENRSLGTTQLFRTQAQVDAAAKDIAVLEQSGVPYELLDRDGIARVEPALAGVKDILAGALRLPNDQTGDCQLFTTKLADMALKLGVEFRFGQDIQRLDFAGDRINGVWIDGKLETADRYVLALGSYSPQMLKPLGIKAPVYPLKGYSLTVPITNGDMAPTSTILDETYKVAITRFDNRIRVGGMAEIAGFDLSLNPRRRETLEMIVNDLYPRGGDLSQASFWTGLRPATPDGTPIVGATAFRNLFLNTGHGTLGWTMACGSGRLLADLIARKKPQISAEGLDISRYGNSREVAKHGQTAPAHQQ</sequence>
<proteinExistence type="inferred from homology"/>
<reference key="1">
    <citation type="submission" date="2008-01" db="EMBL/GenBank/DDBJ databases">
        <title>Complete sequence of Pseudomonas putida GB-1.</title>
        <authorList>
            <consortium name="US DOE Joint Genome Institute"/>
            <person name="Copeland A."/>
            <person name="Lucas S."/>
            <person name="Lapidus A."/>
            <person name="Barry K."/>
            <person name="Glavina del Rio T."/>
            <person name="Dalin E."/>
            <person name="Tice H."/>
            <person name="Pitluck S."/>
            <person name="Bruce D."/>
            <person name="Goodwin L."/>
            <person name="Chertkov O."/>
            <person name="Brettin T."/>
            <person name="Detter J.C."/>
            <person name="Han C."/>
            <person name="Kuske C.R."/>
            <person name="Schmutz J."/>
            <person name="Larimer F."/>
            <person name="Land M."/>
            <person name="Hauser L."/>
            <person name="Kyrpides N."/>
            <person name="Kim E."/>
            <person name="McCarthy J.K."/>
            <person name="Richardson P."/>
        </authorList>
    </citation>
    <scope>NUCLEOTIDE SEQUENCE [LARGE SCALE GENOMIC DNA]</scope>
    <source>
        <strain>GB-1</strain>
    </source>
</reference>
<gene>
    <name evidence="1" type="primary">dadA</name>
    <name type="ordered locus">PputGB1_5322</name>
</gene>
<feature type="chain" id="PRO_1000085514" description="D-amino acid dehydrogenase">
    <location>
        <begin position="1"/>
        <end position="434"/>
    </location>
</feature>
<feature type="binding site" evidence="1">
    <location>
        <begin position="3"/>
        <end position="17"/>
    </location>
    <ligand>
        <name>FAD</name>
        <dbReference type="ChEBI" id="CHEBI:57692"/>
    </ligand>
</feature>
<organism>
    <name type="scientific">Pseudomonas putida (strain GB-1)</name>
    <dbReference type="NCBI Taxonomy" id="76869"/>
    <lineage>
        <taxon>Bacteria</taxon>
        <taxon>Pseudomonadati</taxon>
        <taxon>Pseudomonadota</taxon>
        <taxon>Gammaproteobacteria</taxon>
        <taxon>Pseudomonadales</taxon>
        <taxon>Pseudomonadaceae</taxon>
        <taxon>Pseudomonas</taxon>
    </lineage>
</organism>
<name>DADA_PSEPG</name>
<keyword id="KW-0274">FAD</keyword>
<keyword id="KW-0285">Flavoprotein</keyword>
<keyword id="KW-0560">Oxidoreductase</keyword>
<protein>
    <recommendedName>
        <fullName evidence="1">D-amino acid dehydrogenase</fullName>
        <ecNumber evidence="1">1.4.99.-</ecNumber>
    </recommendedName>
</protein>
<dbReference type="EC" id="1.4.99.-" evidence="1"/>
<dbReference type="EMBL" id="CP000926">
    <property type="protein sequence ID" value="ABZ01204.1"/>
    <property type="molecule type" value="Genomic_DNA"/>
</dbReference>
<dbReference type="RefSeq" id="WP_012274810.1">
    <property type="nucleotide sequence ID" value="NC_010322.1"/>
</dbReference>
<dbReference type="SMR" id="B0KQ74"/>
<dbReference type="KEGG" id="ppg:PputGB1_5322"/>
<dbReference type="eggNOG" id="COG0665">
    <property type="taxonomic scope" value="Bacteria"/>
</dbReference>
<dbReference type="HOGENOM" id="CLU_007884_9_2_6"/>
<dbReference type="UniPathway" id="UPA00043">
    <property type="reaction ID" value="UER00498"/>
</dbReference>
<dbReference type="Proteomes" id="UP000002157">
    <property type="component" value="Chromosome"/>
</dbReference>
<dbReference type="GO" id="GO:0005737">
    <property type="term" value="C:cytoplasm"/>
    <property type="evidence" value="ECO:0007669"/>
    <property type="project" value="TreeGrafter"/>
</dbReference>
<dbReference type="GO" id="GO:0005886">
    <property type="term" value="C:plasma membrane"/>
    <property type="evidence" value="ECO:0007669"/>
    <property type="project" value="TreeGrafter"/>
</dbReference>
<dbReference type="GO" id="GO:0008718">
    <property type="term" value="F:D-amino-acid dehydrogenase activity"/>
    <property type="evidence" value="ECO:0007669"/>
    <property type="project" value="UniProtKB-UniRule"/>
</dbReference>
<dbReference type="GO" id="GO:0055130">
    <property type="term" value="P:D-alanine catabolic process"/>
    <property type="evidence" value="ECO:0007669"/>
    <property type="project" value="UniProtKB-UniPathway"/>
</dbReference>
<dbReference type="FunFam" id="3.50.50.60:FF:000020">
    <property type="entry name" value="D-amino acid dehydrogenase"/>
    <property type="match status" value="1"/>
</dbReference>
<dbReference type="Gene3D" id="3.30.9.10">
    <property type="entry name" value="D-Amino Acid Oxidase, subunit A, domain 2"/>
    <property type="match status" value="1"/>
</dbReference>
<dbReference type="Gene3D" id="3.50.50.60">
    <property type="entry name" value="FAD/NAD(P)-binding domain"/>
    <property type="match status" value="2"/>
</dbReference>
<dbReference type="HAMAP" id="MF_01202">
    <property type="entry name" value="DadA"/>
    <property type="match status" value="1"/>
</dbReference>
<dbReference type="InterPro" id="IPR023080">
    <property type="entry name" value="DadA"/>
</dbReference>
<dbReference type="InterPro" id="IPR006076">
    <property type="entry name" value="FAD-dep_OxRdtase"/>
</dbReference>
<dbReference type="InterPro" id="IPR036188">
    <property type="entry name" value="FAD/NAD-bd_sf"/>
</dbReference>
<dbReference type="NCBIfam" id="NF001933">
    <property type="entry name" value="PRK00711.1"/>
    <property type="match status" value="1"/>
</dbReference>
<dbReference type="PANTHER" id="PTHR13847:SF280">
    <property type="entry name" value="D-AMINO ACID DEHYDROGENASE"/>
    <property type="match status" value="1"/>
</dbReference>
<dbReference type="PANTHER" id="PTHR13847">
    <property type="entry name" value="SARCOSINE DEHYDROGENASE-RELATED"/>
    <property type="match status" value="1"/>
</dbReference>
<dbReference type="Pfam" id="PF01266">
    <property type="entry name" value="DAO"/>
    <property type="match status" value="1"/>
</dbReference>
<dbReference type="SUPFAM" id="SSF54373">
    <property type="entry name" value="FAD-linked reductases, C-terminal domain"/>
    <property type="match status" value="1"/>
</dbReference>
<dbReference type="SUPFAM" id="SSF51905">
    <property type="entry name" value="FAD/NAD(P)-binding domain"/>
    <property type="match status" value="1"/>
</dbReference>
<comment type="function">
    <text evidence="1">Oxidative deamination of D-amino acids.</text>
</comment>
<comment type="catalytic activity">
    <reaction evidence="1">
        <text>a D-alpha-amino acid + A + H2O = a 2-oxocarboxylate + AH2 + NH4(+)</text>
        <dbReference type="Rhea" id="RHEA:18125"/>
        <dbReference type="ChEBI" id="CHEBI:13193"/>
        <dbReference type="ChEBI" id="CHEBI:15377"/>
        <dbReference type="ChEBI" id="CHEBI:17499"/>
        <dbReference type="ChEBI" id="CHEBI:28938"/>
        <dbReference type="ChEBI" id="CHEBI:35179"/>
        <dbReference type="ChEBI" id="CHEBI:59871"/>
    </reaction>
</comment>
<comment type="cofactor">
    <cofactor evidence="1">
        <name>FAD</name>
        <dbReference type="ChEBI" id="CHEBI:57692"/>
    </cofactor>
</comment>
<comment type="pathway">
    <text>Amino-acid degradation; D-alanine degradation; NH(3) and pyruvate from D-alanine: step 1/1.</text>
</comment>
<comment type="similarity">
    <text evidence="1">Belongs to the DadA oxidoreductase family.</text>
</comment>
<accession>B0KQ74</accession>